<proteinExistence type="inferred from homology"/>
<name>ISPG_KLEP3</name>
<accession>B5XNL5</accession>
<gene>
    <name evidence="1" type="primary">ispG</name>
    <name type="ordered locus">KPK_1275</name>
</gene>
<evidence type="ECO:0000255" key="1">
    <source>
        <dbReference type="HAMAP-Rule" id="MF_00159"/>
    </source>
</evidence>
<sequence>MHNQAPIQRRKSKRIYVGNVPIGDGAPIAVQSMTNTRTTDVAATVSQIKALERVGADIVRVSVPTMDAAEAFKLIKQQVNVPLVADIHFDYRIALKVAEYGVDCLRINPGNIGNEERIRTVVDCARDKNIPIRIGVNAGSLEKDLQEKYGEPTPQALLESAMRHVDHLDRLNFDQFKVSVKASDVFLAVESYRLLAKQIDQPLHLGITEAGGARSGAVKSAIGLGLLLSEGIGDTLRVSLAADPVEEIKVGFDILKSLRIRARGINFIACPTCSRQEFDVIGTVNALEQRLEDIITPMDVSIIGCVVNGPGEALVSTLGVTGGNKKSGLYEDGVRKDRLDNDDMIDQLEARIRAKASMLDEARRIDVQQLEAK</sequence>
<dbReference type="EC" id="1.17.7.3" evidence="1"/>
<dbReference type="EMBL" id="CP000964">
    <property type="protein sequence ID" value="ACI09355.1"/>
    <property type="molecule type" value="Genomic_DNA"/>
</dbReference>
<dbReference type="SMR" id="B5XNL5"/>
<dbReference type="KEGG" id="kpe:KPK_1275"/>
<dbReference type="HOGENOM" id="CLU_042258_0_0_6"/>
<dbReference type="UniPathway" id="UPA00056">
    <property type="reaction ID" value="UER00096"/>
</dbReference>
<dbReference type="Proteomes" id="UP000001734">
    <property type="component" value="Chromosome"/>
</dbReference>
<dbReference type="GO" id="GO:0051539">
    <property type="term" value="F:4 iron, 4 sulfur cluster binding"/>
    <property type="evidence" value="ECO:0007669"/>
    <property type="project" value="UniProtKB-UniRule"/>
</dbReference>
<dbReference type="GO" id="GO:0046429">
    <property type="term" value="F:4-hydroxy-3-methylbut-2-en-1-yl diphosphate synthase activity (ferredoxin)"/>
    <property type="evidence" value="ECO:0007669"/>
    <property type="project" value="UniProtKB-UniRule"/>
</dbReference>
<dbReference type="GO" id="GO:0141197">
    <property type="term" value="F:4-hydroxy-3-methylbut-2-enyl-diphosphate synthase activity (flavodoxin)"/>
    <property type="evidence" value="ECO:0007669"/>
    <property type="project" value="UniProtKB-EC"/>
</dbReference>
<dbReference type="GO" id="GO:0005506">
    <property type="term" value="F:iron ion binding"/>
    <property type="evidence" value="ECO:0007669"/>
    <property type="project" value="InterPro"/>
</dbReference>
<dbReference type="GO" id="GO:0019288">
    <property type="term" value="P:isopentenyl diphosphate biosynthetic process, methylerythritol 4-phosphate pathway"/>
    <property type="evidence" value="ECO:0007669"/>
    <property type="project" value="UniProtKB-UniRule"/>
</dbReference>
<dbReference type="GO" id="GO:0016114">
    <property type="term" value="P:terpenoid biosynthetic process"/>
    <property type="evidence" value="ECO:0007669"/>
    <property type="project" value="InterPro"/>
</dbReference>
<dbReference type="FunFam" id="3.20.20.20:FF:000001">
    <property type="entry name" value="4-hydroxy-3-methylbut-2-en-1-yl diphosphate synthase (flavodoxin)"/>
    <property type="match status" value="1"/>
</dbReference>
<dbReference type="FunFam" id="3.30.413.10:FF:000002">
    <property type="entry name" value="4-hydroxy-3-methylbut-2-en-1-yl diphosphate synthase (flavodoxin)"/>
    <property type="match status" value="1"/>
</dbReference>
<dbReference type="Gene3D" id="3.20.20.20">
    <property type="entry name" value="Dihydropteroate synthase-like"/>
    <property type="match status" value="1"/>
</dbReference>
<dbReference type="Gene3D" id="3.30.413.10">
    <property type="entry name" value="Sulfite Reductase Hemoprotein, domain 1"/>
    <property type="match status" value="1"/>
</dbReference>
<dbReference type="HAMAP" id="MF_00159">
    <property type="entry name" value="IspG"/>
    <property type="match status" value="1"/>
</dbReference>
<dbReference type="InterPro" id="IPR011005">
    <property type="entry name" value="Dihydropteroate_synth-like_sf"/>
</dbReference>
<dbReference type="InterPro" id="IPR016425">
    <property type="entry name" value="IspG_bac"/>
</dbReference>
<dbReference type="InterPro" id="IPR004588">
    <property type="entry name" value="IspG_bac-typ"/>
</dbReference>
<dbReference type="InterPro" id="IPR045854">
    <property type="entry name" value="NO2/SO3_Rdtase_4Fe4S_sf"/>
</dbReference>
<dbReference type="NCBIfam" id="TIGR00612">
    <property type="entry name" value="ispG_gcpE"/>
    <property type="match status" value="1"/>
</dbReference>
<dbReference type="NCBIfam" id="NF001540">
    <property type="entry name" value="PRK00366.1"/>
    <property type="match status" value="1"/>
</dbReference>
<dbReference type="PANTHER" id="PTHR30454">
    <property type="entry name" value="4-HYDROXY-3-METHYLBUT-2-EN-1-YL DIPHOSPHATE SYNTHASE"/>
    <property type="match status" value="1"/>
</dbReference>
<dbReference type="PANTHER" id="PTHR30454:SF0">
    <property type="entry name" value="4-HYDROXY-3-METHYLBUT-2-EN-1-YL DIPHOSPHATE SYNTHASE (FERREDOXIN), CHLOROPLASTIC"/>
    <property type="match status" value="1"/>
</dbReference>
<dbReference type="Pfam" id="PF04551">
    <property type="entry name" value="GcpE"/>
    <property type="match status" value="1"/>
</dbReference>
<dbReference type="PIRSF" id="PIRSF004640">
    <property type="entry name" value="IspG"/>
    <property type="match status" value="1"/>
</dbReference>
<dbReference type="SUPFAM" id="SSF51717">
    <property type="entry name" value="Dihydropteroate synthetase-like"/>
    <property type="match status" value="1"/>
</dbReference>
<dbReference type="SUPFAM" id="SSF56014">
    <property type="entry name" value="Nitrite and sulphite reductase 4Fe-4S domain-like"/>
    <property type="match status" value="1"/>
</dbReference>
<comment type="function">
    <text evidence="1">Converts 2C-methyl-D-erythritol 2,4-cyclodiphosphate (ME-2,4cPP) into 1-hydroxy-2-methyl-2-(E)-butenyl 4-diphosphate.</text>
</comment>
<comment type="catalytic activity">
    <reaction evidence="1">
        <text>(2E)-4-hydroxy-3-methylbut-2-enyl diphosphate + oxidized [flavodoxin] + H2O + 2 H(+) = 2-C-methyl-D-erythritol 2,4-cyclic diphosphate + reduced [flavodoxin]</text>
        <dbReference type="Rhea" id="RHEA:43604"/>
        <dbReference type="Rhea" id="RHEA-COMP:10622"/>
        <dbReference type="Rhea" id="RHEA-COMP:10623"/>
        <dbReference type="ChEBI" id="CHEBI:15377"/>
        <dbReference type="ChEBI" id="CHEBI:15378"/>
        <dbReference type="ChEBI" id="CHEBI:57618"/>
        <dbReference type="ChEBI" id="CHEBI:58210"/>
        <dbReference type="ChEBI" id="CHEBI:58483"/>
        <dbReference type="ChEBI" id="CHEBI:128753"/>
        <dbReference type="EC" id="1.17.7.3"/>
    </reaction>
</comment>
<comment type="cofactor">
    <cofactor evidence="1">
        <name>[4Fe-4S] cluster</name>
        <dbReference type="ChEBI" id="CHEBI:49883"/>
    </cofactor>
    <text evidence="1">Binds 1 [4Fe-4S] cluster.</text>
</comment>
<comment type="pathway">
    <text evidence="1">Isoprenoid biosynthesis; isopentenyl diphosphate biosynthesis via DXP pathway; isopentenyl diphosphate from 1-deoxy-D-xylulose 5-phosphate: step 5/6.</text>
</comment>
<comment type="similarity">
    <text evidence="1">Belongs to the IspG family.</text>
</comment>
<protein>
    <recommendedName>
        <fullName evidence="1">4-hydroxy-3-methylbut-2-en-1-yl diphosphate synthase (flavodoxin)</fullName>
        <ecNumber evidence="1">1.17.7.3</ecNumber>
    </recommendedName>
    <alternativeName>
        <fullName evidence="1">1-hydroxy-2-methyl-2-(E)-butenyl 4-diphosphate synthase</fullName>
    </alternativeName>
</protein>
<keyword id="KW-0004">4Fe-4S</keyword>
<keyword id="KW-0408">Iron</keyword>
<keyword id="KW-0411">Iron-sulfur</keyword>
<keyword id="KW-0414">Isoprene biosynthesis</keyword>
<keyword id="KW-0479">Metal-binding</keyword>
<keyword id="KW-0560">Oxidoreductase</keyword>
<feature type="chain" id="PRO_1000097166" description="4-hydroxy-3-methylbut-2-en-1-yl diphosphate synthase (flavodoxin)">
    <location>
        <begin position="1"/>
        <end position="373"/>
    </location>
</feature>
<feature type="binding site" evidence="1">
    <location>
        <position position="270"/>
    </location>
    <ligand>
        <name>[4Fe-4S] cluster</name>
        <dbReference type="ChEBI" id="CHEBI:49883"/>
    </ligand>
</feature>
<feature type="binding site" evidence="1">
    <location>
        <position position="273"/>
    </location>
    <ligand>
        <name>[4Fe-4S] cluster</name>
        <dbReference type="ChEBI" id="CHEBI:49883"/>
    </ligand>
</feature>
<feature type="binding site" evidence="1">
    <location>
        <position position="305"/>
    </location>
    <ligand>
        <name>[4Fe-4S] cluster</name>
        <dbReference type="ChEBI" id="CHEBI:49883"/>
    </ligand>
</feature>
<feature type="binding site" evidence="1">
    <location>
        <position position="312"/>
    </location>
    <ligand>
        <name>[4Fe-4S] cluster</name>
        <dbReference type="ChEBI" id="CHEBI:49883"/>
    </ligand>
</feature>
<organism>
    <name type="scientific">Klebsiella pneumoniae (strain 342)</name>
    <dbReference type="NCBI Taxonomy" id="507522"/>
    <lineage>
        <taxon>Bacteria</taxon>
        <taxon>Pseudomonadati</taxon>
        <taxon>Pseudomonadota</taxon>
        <taxon>Gammaproteobacteria</taxon>
        <taxon>Enterobacterales</taxon>
        <taxon>Enterobacteriaceae</taxon>
        <taxon>Klebsiella/Raoultella group</taxon>
        <taxon>Klebsiella</taxon>
        <taxon>Klebsiella pneumoniae complex</taxon>
    </lineage>
</organism>
<reference key="1">
    <citation type="journal article" date="2008" name="PLoS Genet.">
        <title>Complete genome sequence of the N2-fixing broad host range endophyte Klebsiella pneumoniae 342 and virulence predictions verified in mice.</title>
        <authorList>
            <person name="Fouts D.E."/>
            <person name="Tyler H.L."/>
            <person name="DeBoy R.T."/>
            <person name="Daugherty S."/>
            <person name="Ren Q."/>
            <person name="Badger J.H."/>
            <person name="Durkin A.S."/>
            <person name="Huot H."/>
            <person name="Shrivastava S."/>
            <person name="Kothari S."/>
            <person name="Dodson R.J."/>
            <person name="Mohamoud Y."/>
            <person name="Khouri H."/>
            <person name="Roesch L.F.W."/>
            <person name="Krogfelt K.A."/>
            <person name="Struve C."/>
            <person name="Triplett E.W."/>
            <person name="Methe B.A."/>
        </authorList>
    </citation>
    <scope>NUCLEOTIDE SEQUENCE [LARGE SCALE GENOMIC DNA]</scope>
    <source>
        <strain>342</strain>
    </source>
</reference>